<sequence>MLDKLGQNLSEALNKIKNATFVDKKLVKEVIKDIQKALIQSDVNVKLVFNMSKEIERKAIEEAPPKGLSKKEHIVKIVYDELVKLLGETIQKLELDASKKSVILLIGIQGSGKTTSAAKLARYIQKKGLRPGLIAADVYRPAAYQQLKQLSEKINVPLFGDETRTKTPVDITKEGMEKLKKVDVIIIDTAGRHKEEEGLLAEMKEMKDLTNPNEIILVIDGTLGQQAKNQAKAFKDSVSEIGSILVTKLDGSAKGGGALSAVAEINAPIKFIGTGEGVDNLEQFDPKKFISRILGFGDLDSLLEKTEDIMDESAEESIDSILKGKFTLIELYAQLETISKMGPMKQILSMIPGMGGNMPKEAAQLTEDKLKRYKIMMDSMTMEEKENPELIKTSRLQRIARGAGVKPEEIKDLLKYYSTTKNAFGNLKRGKMPKMGGQMGQIMRQLMYKD</sequence>
<keyword id="KW-0963">Cytoplasm</keyword>
<keyword id="KW-0342">GTP-binding</keyword>
<keyword id="KW-0378">Hydrolase</keyword>
<keyword id="KW-0547">Nucleotide-binding</keyword>
<keyword id="KW-0687">Ribonucleoprotein</keyword>
<keyword id="KW-0694">RNA-binding</keyword>
<keyword id="KW-0733">Signal recognition particle</keyword>
<reference key="1">
    <citation type="submission" date="2007-10" db="EMBL/GenBank/DDBJ databases">
        <title>Complete sequence of Methanococcus maripaludis C6.</title>
        <authorList>
            <consortium name="US DOE Joint Genome Institute"/>
            <person name="Copeland A."/>
            <person name="Lucas S."/>
            <person name="Lapidus A."/>
            <person name="Barry K."/>
            <person name="Glavina del Rio T."/>
            <person name="Dalin E."/>
            <person name="Tice H."/>
            <person name="Pitluck S."/>
            <person name="Clum A."/>
            <person name="Schmutz J."/>
            <person name="Larimer F."/>
            <person name="Land M."/>
            <person name="Hauser L."/>
            <person name="Kyrpides N."/>
            <person name="Mikhailova N."/>
            <person name="Sieprawska-Lupa M."/>
            <person name="Whitman W.B."/>
            <person name="Richardson P."/>
        </authorList>
    </citation>
    <scope>NUCLEOTIDE SEQUENCE [LARGE SCALE GENOMIC DNA]</scope>
    <source>
        <strain>C6 / ATCC BAA-1332</strain>
    </source>
</reference>
<organism>
    <name type="scientific">Methanococcus maripaludis (strain C6 / ATCC BAA-1332)</name>
    <dbReference type="NCBI Taxonomy" id="444158"/>
    <lineage>
        <taxon>Archaea</taxon>
        <taxon>Methanobacteriati</taxon>
        <taxon>Methanobacteriota</taxon>
        <taxon>Methanomada group</taxon>
        <taxon>Methanococci</taxon>
        <taxon>Methanococcales</taxon>
        <taxon>Methanococcaceae</taxon>
        <taxon>Methanococcus</taxon>
    </lineage>
</organism>
<comment type="function">
    <text evidence="1">Involved in targeting and insertion of nascent membrane proteins into the cytoplasmic membrane. Binds to the hydrophobic signal sequence of the ribosome-nascent chain (RNC) as it emerges from the ribosomes. The SRP-RNC complex is then targeted to the cytoplasmic membrane where it interacts with the SRP receptor FtsY.</text>
</comment>
<comment type="catalytic activity">
    <reaction evidence="1">
        <text>GTP + H2O = GDP + phosphate + H(+)</text>
        <dbReference type="Rhea" id="RHEA:19669"/>
        <dbReference type="ChEBI" id="CHEBI:15377"/>
        <dbReference type="ChEBI" id="CHEBI:15378"/>
        <dbReference type="ChEBI" id="CHEBI:37565"/>
        <dbReference type="ChEBI" id="CHEBI:43474"/>
        <dbReference type="ChEBI" id="CHEBI:58189"/>
        <dbReference type="EC" id="3.6.5.4"/>
    </reaction>
</comment>
<comment type="subunit">
    <text evidence="1">Part of the signal recognition particle protein translocation system, which is composed of SRP and FtsY. Archaeal SRP consists of a 7S RNA molecule of 300 nucleotides and two protein subunits: SRP54 and SRP19.</text>
</comment>
<comment type="subcellular location">
    <subcellularLocation>
        <location evidence="1">Cytoplasm</location>
    </subcellularLocation>
    <text evidence="1">The SRP-RNC complex is targeted to the cytoplasmic membrane.</text>
</comment>
<comment type="domain">
    <text evidence="1">Composed of three domains: the N-terminal N domain, which is responsible for interactions with the ribosome, the central G domain, which binds GTP, and the C-terminal M domain, which binds the RNA and the signal sequence of the RNC.</text>
</comment>
<comment type="similarity">
    <text evidence="1">Belongs to the GTP-binding SRP family. SRP54 subfamily.</text>
</comment>
<accession>A9A9B0</accession>
<proteinExistence type="inferred from homology"/>
<name>SRP54_METM6</name>
<gene>
    <name evidence="1" type="primary">srp54</name>
    <name type="ordered locus">MmarC6_1119</name>
</gene>
<feature type="chain" id="PRO_1000115620" description="Signal recognition particle 54 kDa protein">
    <location>
        <begin position="1"/>
        <end position="450"/>
    </location>
</feature>
<feature type="binding site" evidence="1">
    <location>
        <begin position="107"/>
        <end position="114"/>
    </location>
    <ligand>
        <name>GTP</name>
        <dbReference type="ChEBI" id="CHEBI:37565"/>
    </ligand>
</feature>
<feature type="binding site" evidence="1">
    <location>
        <begin position="188"/>
        <end position="192"/>
    </location>
    <ligand>
        <name>GTP</name>
        <dbReference type="ChEBI" id="CHEBI:37565"/>
    </ligand>
</feature>
<feature type="binding site" evidence="1">
    <location>
        <begin position="247"/>
        <end position="250"/>
    </location>
    <ligand>
        <name>GTP</name>
        <dbReference type="ChEBI" id="CHEBI:37565"/>
    </ligand>
</feature>
<dbReference type="EC" id="3.6.5.4" evidence="1"/>
<dbReference type="EMBL" id="CP000867">
    <property type="protein sequence ID" value="ABX01933.1"/>
    <property type="molecule type" value="Genomic_DNA"/>
</dbReference>
<dbReference type="SMR" id="A9A9B0"/>
<dbReference type="STRING" id="444158.MmarC6_1119"/>
<dbReference type="KEGG" id="mmx:MmarC6_1119"/>
<dbReference type="eggNOG" id="arCOG01228">
    <property type="taxonomic scope" value="Archaea"/>
</dbReference>
<dbReference type="HOGENOM" id="CLU_009301_6_0_2"/>
<dbReference type="OrthoDB" id="52849at2157"/>
<dbReference type="PhylomeDB" id="A9A9B0"/>
<dbReference type="GO" id="GO:0048500">
    <property type="term" value="C:signal recognition particle"/>
    <property type="evidence" value="ECO:0007669"/>
    <property type="project" value="UniProtKB-UniRule"/>
</dbReference>
<dbReference type="GO" id="GO:0008312">
    <property type="term" value="F:7S RNA binding"/>
    <property type="evidence" value="ECO:0007669"/>
    <property type="project" value="UniProtKB-UniRule"/>
</dbReference>
<dbReference type="GO" id="GO:0016887">
    <property type="term" value="F:ATP hydrolysis activity"/>
    <property type="evidence" value="ECO:0007669"/>
    <property type="project" value="InterPro"/>
</dbReference>
<dbReference type="GO" id="GO:0005525">
    <property type="term" value="F:GTP binding"/>
    <property type="evidence" value="ECO:0007669"/>
    <property type="project" value="UniProtKB-UniRule"/>
</dbReference>
<dbReference type="GO" id="GO:0003924">
    <property type="term" value="F:GTPase activity"/>
    <property type="evidence" value="ECO:0007669"/>
    <property type="project" value="UniProtKB-UniRule"/>
</dbReference>
<dbReference type="GO" id="GO:0006614">
    <property type="term" value="P:SRP-dependent cotranslational protein targeting to membrane"/>
    <property type="evidence" value="ECO:0007669"/>
    <property type="project" value="InterPro"/>
</dbReference>
<dbReference type="CDD" id="cd17875">
    <property type="entry name" value="SRP54_G"/>
    <property type="match status" value="1"/>
</dbReference>
<dbReference type="FunFam" id="3.40.50.300:FF:000022">
    <property type="entry name" value="Signal recognition particle 54 kDa subunit"/>
    <property type="match status" value="1"/>
</dbReference>
<dbReference type="Gene3D" id="3.40.50.300">
    <property type="entry name" value="P-loop containing nucleotide triphosphate hydrolases"/>
    <property type="match status" value="1"/>
</dbReference>
<dbReference type="Gene3D" id="1.20.120.140">
    <property type="entry name" value="Signal recognition particle SRP54, nucleotide-binding domain"/>
    <property type="match status" value="1"/>
</dbReference>
<dbReference type="Gene3D" id="1.10.260.30">
    <property type="entry name" value="Signal recognition particle, SRP54 subunit, M-domain"/>
    <property type="match status" value="1"/>
</dbReference>
<dbReference type="HAMAP" id="MF_00306">
    <property type="entry name" value="SRP54"/>
    <property type="match status" value="1"/>
</dbReference>
<dbReference type="InterPro" id="IPR003593">
    <property type="entry name" value="AAA+_ATPase"/>
</dbReference>
<dbReference type="InterPro" id="IPR027417">
    <property type="entry name" value="P-loop_NTPase"/>
</dbReference>
<dbReference type="InterPro" id="IPR036891">
    <property type="entry name" value="Signal_recog_part_SRP54_M_sf"/>
</dbReference>
<dbReference type="InterPro" id="IPR013822">
    <property type="entry name" value="Signal_recog_particl_SRP54_hlx"/>
</dbReference>
<dbReference type="InterPro" id="IPR004125">
    <property type="entry name" value="Signal_recog_particle_SRP54_M"/>
</dbReference>
<dbReference type="InterPro" id="IPR036225">
    <property type="entry name" value="SRP/SRP_N"/>
</dbReference>
<dbReference type="InterPro" id="IPR022941">
    <property type="entry name" value="SRP54"/>
</dbReference>
<dbReference type="InterPro" id="IPR000897">
    <property type="entry name" value="SRP54_GTPase_dom"/>
</dbReference>
<dbReference type="InterPro" id="IPR042101">
    <property type="entry name" value="SRP54_N_sf"/>
</dbReference>
<dbReference type="PANTHER" id="PTHR11564">
    <property type="entry name" value="SIGNAL RECOGNITION PARTICLE 54K PROTEIN SRP54"/>
    <property type="match status" value="1"/>
</dbReference>
<dbReference type="PANTHER" id="PTHR11564:SF5">
    <property type="entry name" value="SIGNAL RECOGNITION PARTICLE SUBUNIT SRP54"/>
    <property type="match status" value="1"/>
</dbReference>
<dbReference type="Pfam" id="PF00448">
    <property type="entry name" value="SRP54"/>
    <property type="match status" value="1"/>
</dbReference>
<dbReference type="Pfam" id="PF02881">
    <property type="entry name" value="SRP54_N"/>
    <property type="match status" value="1"/>
</dbReference>
<dbReference type="Pfam" id="PF02978">
    <property type="entry name" value="SRP_SPB"/>
    <property type="match status" value="1"/>
</dbReference>
<dbReference type="SMART" id="SM00382">
    <property type="entry name" value="AAA"/>
    <property type="match status" value="1"/>
</dbReference>
<dbReference type="SMART" id="SM00962">
    <property type="entry name" value="SRP54"/>
    <property type="match status" value="1"/>
</dbReference>
<dbReference type="SMART" id="SM00963">
    <property type="entry name" value="SRP54_N"/>
    <property type="match status" value="1"/>
</dbReference>
<dbReference type="SUPFAM" id="SSF47364">
    <property type="entry name" value="Domain of the SRP/SRP receptor G-proteins"/>
    <property type="match status" value="1"/>
</dbReference>
<dbReference type="SUPFAM" id="SSF52540">
    <property type="entry name" value="P-loop containing nucleoside triphosphate hydrolases"/>
    <property type="match status" value="1"/>
</dbReference>
<dbReference type="SUPFAM" id="SSF47446">
    <property type="entry name" value="Signal peptide-binding domain"/>
    <property type="match status" value="1"/>
</dbReference>
<dbReference type="PROSITE" id="PS00300">
    <property type="entry name" value="SRP54"/>
    <property type="match status" value="1"/>
</dbReference>
<evidence type="ECO:0000255" key="1">
    <source>
        <dbReference type="HAMAP-Rule" id="MF_00306"/>
    </source>
</evidence>
<protein>
    <recommendedName>
        <fullName evidence="1">Signal recognition particle 54 kDa protein</fullName>
        <shortName evidence="1">SRP54</shortName>
        <ecNumber evidence="1">3.6.5.4</ecNumber>
    </recommendedName>
</protein>